<feature type="chain" id="PRO_1000091805" description="2-dehydro-3-deoxyphosphooctonate aldolase">
    <location>
        <begin position="1"/>
        <end position="269"/>
    </location>
</feature>
<protein>
    <recommendedName>
        <fullName evidence="1">2-dehydro-3-deoxyphosphooctonate aldolase</fullName>
        <ecNumber evidence="1">2.5.1.55</ecNumber>
    </recommendedName>
    <alternativeName>
        <fullName evidence="1">3-deoxy-D-manno-octulosonic acid 8-phosphate synthase</fullName>
    </alternativeName>
    <alternativeName>
        <fullName evidence="1">KDO-8-phosphate synthase</fullName>
        <shortName evidence="1">KDO 8-P synthase</shortName>
        <shortName evidence="1">KDOPS</shortName>
    </alternativeName>
    <alternativeName>
        <fullName evidence="1">Phospho-2-dehydro-3-deoxyoctonate aldolase</fullName>
    </alternativeName>
</protein>
<dbReference type="EC" id="2.5.1.55" evidence="1"/>
<dbReference type="EMBL" id="AM884177">
    <property type="protein sequence ID" value="CAP06422.1"/>
    <property type="molecule type" value="Genomic_DNA"/>
</dbReference>
<dbReference type="RefSeq" id="WP_009873271.1">
    <property type="nucleotide sequence ID" value="NC_010280.2"/>
</dbReference>
<dbReference type="SMR" id="B0BAB0"/>
<dbReference type="KEGG" id="ctl:CTLon_0024"/>
<dbReference type="HOGENOM" id="CLU_036666_0_0_0"/>
<dbReference type="UniPathway" id="UPA00030"/>
<dbReference type="UniPathway" id="UPA00357">
    <property type="reaction ID" value="UER00474"/>
</dbReference>
<dbReference type="Proteomes" id="UP001154401">
    <property type="component" value="Chromosome"/>
</dbReference>
<dbReference type="GO" id="GO:0005737">
    <property type="term" value="C:cytoplasm"/>
    <property type="evidence" value="ECO:0007669"/>
    <property type="project" value="UniProtKB-SubCell"/>
</dbReference>
<dbReference type="GO" id="GO:0008676">
    <property type="term" value="F:3-deoxy-8-phosphooctulonate synthase activity"/>
    <property type="evidence" value="ECO:0007669"/>
    <property type="project" value="UniProtKB-UniRule"/>
</dbReference>
<dbReference type="GO" id="GO:0019294">
    <property type="term" value="P:keto-3-deoxy-D-manno-octulosonic acid biosynthetic process"/>
    <property type="evidence" value="ECO:0007669"/>
    <property type="project" value="UniProtKB-UniRule"/>
</dbReference>
<dbReference type="Gene3D" id="3.20.20.70">
    <property type="entry name" value="Aldolase class I"/>
    <property type="match status" value="1"/>
</dbReference>
<dbReference type="HAMAP" id="MF_00056">
    <property type="entry name" value="KDO8P_synth"/>
    <property type="match status" value="1"/>
</dbReference>
<dbReference type="InterPro" id="IPR013785">
    <property type="entry name" value="Aldolase_TIM"/>
</dbReference>
<dbReference type="InterPro" id="IPR006218">
    <property type="entry name" value="DAHP1/KDSA"/>
</dbReference>
<dbReference type="InterPro" id="IPR006269">
    <property type="entry name" value="KDO8P_synthase"/>
</dbReference>
<dbReference type="NCBIfam" id="TIGR01362">
    <property type="entry name" value="KDO8P_synth"/>
    <property type="match status" value="1"/>
</dbReference>
<dbReference type="NCBIfam" id="NF003543">
    <property type="entry name" value="PRK05198.1"/>
    <property type="match status" value="1"/>
</dbReference>
<dbReference type="PANTHER" id="PTHR21057">
    <property type="entry name" value="PHOSPHO-2-DEHYDRO-3-DEOXYHEPTONATE ALDOLASE"/>
    <property type="match status" value="1"/>
</dbReference>
<dbReference type="Pfam" id="PF00793">
    <property type="entry name" value="DAHP_synth_1"/>
    <property type="match status" value="1"/>
</dbReference>
<dbReference type="SUPFAM" id="SSF51569">
    <property type="entry name" value="Aldolase"/>
    <property type="match status" value="1"/>
</dbReference>
<comment type="catalytic activity">
    <reaction evidence="1">
        <text>D-arabinose 5-phosphate + phosphoenolpyruvate + H2O = 3-deoxy-alpha-D-manno-2-octulosonate-8-phosphate + phosphate</text>
        <dbReference type="Rhea" id="RHEA:14053"/>
        <dbReference type="ChEBI" id="CHEBI:15377"/>
        <dbReference type="ChEBI" id="CHEBI:43474"/>
        <dbReference type="ChEBI" id="CHEBI:57693"/>
        <dbReference type="ChEBI" id="CHEBI:58702"/>
        <dbReference type="ChEBI" id="CHEBI:85985"/>
        <dbReference type="EC" id="2.5.1.55"/>
    </reaction>
</comment>
<comment type="pathway">
    <text evidence="1">Carbohydrate biosynthesis; 3-deoxy-D-manno-octulosonate biosynthesis; 3-deoxy-D-manno-octulosonate from D-ribulose 5-phosphate: step 2/3.</text>
</comment>
<comment type="pathway">
    <text evidence="1">Bacterial outer membrane biogenesis; lipopolysaccharide biosynthesis.</text>
</comment>
<comment type="subcellular location">
    <subcellularLocation>
        <location evidence="1">Cytoplasm</location>
    </subcellularLocation>
</comment>
<comment type="similarity">
    <text evidence="1">Belongs to the KdsA family.</text>
</comment>
<evidence type="ECO:0000255" key="1">
    <source>
        <dbReference type="HAMAP-Rule" id="MF_00056"/>
    </source>
</evidence>
<sequence length="269" mass="29645">MFPENKMLLIAGPCVIEDNSVFETARRLKEIVAPYASSVHWIFKSSYDKANRSSVHNYRGPGLRLGLQTLAKIKEELDVEILTDVHSPDEAREAAKVCDIIQVPAFLCRQTDLLVTAGETQAIVNIKKGQFLSPWEMQGPIDKVLSTGNNKIILTERGCSFGYNNLVSDMRSIEVLRRFGFPVVFDGTHSVQLPGALHSQSGGQTEFIPVLTRSAIAAGVQGLFIETHPNPSSALSDAASMLSLKDLERLLPAWVQLFTYIQEMDAVSV</sequence>
<organism>
    <name type="scientific">Chlamydia trachomatis serovar L2b (strain UCH-1/proctitis)</name>
    <dbReference type="NCBI Taxonomy" id="471473"/>
    <lineage>
        <taxon>Bacteria</taxon>
        <taxon>Pseudomonadati</taxon>
        <taxon>Chlamydiota</taxon>
        <taxon>Chlamydiia</taxon>
        <taxon>Chlamydiales</taxon>
        <taxon>Chlamydiaceae</taxon>
        <taxon>Chlamydia/Chlamydophila group</taxon>
        <taxon>Chlamydia</taxon>
    </lineage>
</organism>
<keyword id="KW-0963">Cytoplasm</keyword>
<keyword id="KW-0448">Lipopolysaccharide biosynthesis</keyword>
<keyword id="KW-0808">Transferase</keyword>
<reference key="1">
    <citation type="journal article" date="2008" name="Genome Res.">
        <title>Chlamydia trachomatis: genome sequence analysis of lymphogranuloma venereum isolates.</title>
        <authorList>
            <person name="Thomson N.R."/>
            <person name="Holden M.T.G."/>
            <person name="Carder C."/>
            <person name="Lennard N."/>
            <person name="Lockey S.J."/>
            <person name="Marsh P."/>
            <person name="Skipp P."/>
            <person name="O'Connor C.D."/>
            <person name="Goodhead I."/>
            <person name="Norbertzcak H."/>
            <person name="Harris B."/>
            <person name="Ormond D."/>
            <person name="Rance R."/>
            <person name="Quail M.A."/>
            <person name="Parkhill J."/>
            <person name="Stephens R.S."/>
            <person name="Clarke I.N."/>
        </authorList>
    </citation>
    <scope>NUCLEOTIDE SEQUENCE [LARGE SCALE GENOMIC DNA]</scope>
    <source>
        <strain>UCH-1/proctitis</strain>
    </source>
</reference>
<proteinExistence type="inferred from homology"/>
<gene>
    <name evidence="1" type="primary">kdsA</name>
    <name type="ordered locus">CTLon_0024</name>
</gene>
<accession>B0BAB0</accession>
<name>KDSA_CHLTB</name>